<evidence type="ECO:0000255" key="1">
    <source>
        <dbReference type="HAMAP-Rule" id="MF_00471"/>
    </source>
</evidence>
<reference key="1">
    <citation type="journal article" date="2006" name="Proc. Natl. Acad. Sci. U.S.A.">
        <title>Identification of genes subject to positive selection in uropathogenic strains of Escherichia coli: a comparative genomics approach.</title>
        <authorList>
            <person name="Chen S.L."/>
            <person name="Hung C.-S."/>
            <person name="Xu J."/>
            <person name="Reigstad C.S."/>
            <person name="Magrini V."/>
            <person name="Sabo A."/>
            <person name="Blasiar D."/>
            <person name="Bieri T."/>
            <person name="Meyer R.R."/>
            <person name="Ozersky P."/>
            <person name="Armstrong J.R."/>
            <person name="Fulton R.S."/>
            <person name="Latreille J.P."/>
            <person name="Spieth J."/>
            <person name="Hooton T.M."/>
            <person name="Mardis E.R."/>
            <person name="Hultgren S.J."/>
            <person name="Gordon J.I."/>
        </authorList>
    </citation>
    <scope>NUCLEOTIDE SEQUENCE [LARGE SCALE GENOMIC DNA]</scope>
    <source>
        <strain>UTI89 / UPEC</strain>
    </source>
</reference>
<gene>
    <name evidence="1" type="primary">rraA</name>
    <name type="ordered locus">UTI89_C4513</name>
</gene>
<dbReference type="EMBL" id="CP000243">
    <property type="protein sequence ID" value="ABE09925.1"/>
    <property type="molecule type" value="Genomic_DNA"/>
</dbReference>
<dbReference type="RefSeq" id="WP_000872908.1">
    <property type="nucleotide sequence ID" value="NZ_CP064825.1"/>
</dbReference>
<dbReference type="SMR" id="Q1R3Y9"/>
<dbReference type="GeneID" id="93777969"/>
<dbReference type="KEGG" id="eci:UTI89_C4513"/>
<dbReference type="HOGENOM" id="CLU_072626_4_0_6"/>
<dbReference type="Proteomes" id="UP000001952">
    <property type="component" value="Chromosome"/>
</dbReference>
<dbReference type="GO" id="GO:0005829">
    <property type="term" value="C:cytosol"/>
    <property type="evidence" value="ECO:0007669"/>
    <property type="project" value="TreeGrafter"/>
</dbReference>
<dbReference type="GO" id="GO:0060698">
    <property type="term" value="F:endoribonuclease inhibitor activity"/>
    <property type="evidence" value="ECO:0007669"/>
    <property type="project" value="UniProtKB-UniRule"/>
</dbReference>
<dbReference type="GO" id="GO:0019899">
    <property type="term" value="F:enzyme binding"/>
    <property type="evidence" value="ECO:0007669"/>
    <property type="project" value="UniProtKB-UniRule"/>
</dbReference>
<dbReference type="GO" id="GO:1902369">
    <property type="term" value="P:negative regulation of RNA catabolic process"/>
    <property type="evidence" value="ECO:0007669"/>
    <property type="project" value="TreeGrafter"/>
</dbReference>
<dbReference type="CDD" id="cd16841">
    <property type="entry name" value="RraA_family"/>
    <property type="match status" value="1"/>
</dbReference>
<dbReference type="FunFam" id="3.50.30.40:FF:000001">
    <property type="entry name" value="Regulator of ribonuclease activity A"/>
    <property type="match status" value="1"/>
</dbReference>
<dbReference type="Gene3D" id="3.50.30.40">
    <property type="entry name" value="Ribonuclease E inhibitor RraA/RraA-like"/>
    <property type="match status" value="1"/>
</dbReference>
<dbReference type="HAMAP" id="MF_00471">
    <property type="entry name" value="RraA"/>
    <property type="match status" value="1"/>
</dbReference>
<dbReference type="InterPro" id="IPR010203">
    <property type="entry name" value="RraA"/>
</dbReference>
<dbReference type="InterPro" id="IPR005493">
    <property type="entry name" value="RraA/RraA-like"/>
</dbReference>
<dbReference type="InterPro" id="IPR036704">
    <property type="entry name" value="RraA/RraA-like_sf"/>
</dbReference>
<dbReference type="InterPro" id="IPR014339">
    <property type="entry name" value="RraA_gpbac"/>
</dbReference>
<dbReference type="NCBIfam" id="TIGR01935">
    <property type="entry name" value="NOT-MenG"/>
    <property type="match status" value="1"/>
</dbReference>
<dbReference type="NCBIfam" id="NF006875">
    <property type="entry name" value="PRK09372.1"/>
    <property type="match status" value="1"/>
</dbReference>
<dbReference type="NCBIfam" id="TIGR02998">
    <property type="entry name" value="RraA_entero"/>
    <property type="match status" value="1"/>
</dbReference>
<dbReference type="PANTHER" id="PTHR33254">
    <property type="entry name" value="4-HYDROXY-4-METHYL-2-OXOGLUTARATE ALDOLASE 3-RELATED"/>
    <property type="match status" value="1"/>
</dbReference>
<dbReference type="PANTHER" id="PTHR33254:SF29">
    <property type="entry name" value="REGULATOR OF RIBONUCLEASE ACTIVITY A"/>
    <property type="match status" value="1"/>
</dbReference>
<dbReference type="Pfam" id="PF03737">
    <property type="entry name" value="RraA-like"/>
    <property type="match status" value="1"/>
</dbReference>
<dbReference type="SUPFAM" id="SSF89562">
    <property type="entry name" value="RraA-like"/>
    <property type="match status" value="1"/>
</dbReference>
<proteinExistence type="inferred from homology"/>
<sequence length="161" mass="17360">MKYDTSELCDIYQEDVNVVEPLFSNFGGRASFGGQIITVKCFEDNGLLYDLLEQNGRGRVLVVDGGGSVRRALVDAELARLAVQNEWEGLVIYGAVRQVDDLEELDIGIQAMAAIPVGAAGEGIGESDVRVNFGGVTFFSGDHLYADNTGIILSEDPLDIE</sequence>
<protein>
    <recommendedName>
        <fullName evidence="1">Regulator of ribonuclease activity A</fullName>
    </recommendedName>
</protein>
<name>RRAA_ECOUT</name>
<keyword id="KW-0963">Cytoplasm</keyword>
<comment type="function">
    <text evidence="1">Globally modulates RNA abundance by binding to RNase E (Rne) and regulating its endonucleolytic activity. Can modulate Rne action in a substrate-dependent manner by altering the composition of the degradosome. Modulates RNA-binding and helicase activities of the degradosome.</text>
</comment>
<comment type="subunit">
    <text evidence="1">Homotrimer. Binds to both RNA-binding sites in the C-terminal region of Rne and to RhlB.</text>
</comment>
<comment type="subcellular location">
    <subcellularLocation>
        <location evidence="1">Cytoplasm</location>
    </subcellularLocation>
</comment>
<comment type="similarity">
    <text evidence="1">Belongs to the RraA family.</text>
</comment>
<feature type="chain" id="PRO_1000013838" description="Regulator of ribonuclease activity A">
    <location>
        <begin position="1"/>
        <end position="161"/>
    </location>
</feature>
<accession>Q1R3Y9</accession>
<organism>
    <name type="scientific">Escherichia coli (strain UTI89 / UPEC)</name>
    <dbReference type="NCBI Taxonomy" id="364106"/>
    <lineage>
        <taxon>Bacteria</taxon>
        <taxon>Pseudomonadati</taxon>
        <taxon>Pseudomonadota</taxon>
        <taxon>Gammaproteobacteria</taxon>
        <taxon>Enterobacterales</taxon>
        <taxon>Enterobacteriaceae</taxon>
        <taxon>Escherichia</taxon>
    </lineage>
</organism>